<accession>Q92LX3</accession>
<comment type="function">
    <text evidence="1">Part of the ABC transporter complex MetNIQ involved in methionine import. Responsible for energy coupling to the transport system.</text>
</comment>
<comment type="catalytic activity">
    <reaction evidence="1">
        <text>L-methionine(out) + ATP + H2O = L-methionine(in) + ADP + phosphate + H(+)</text>
        <dbReference type="Rhea" id="RHEA:29779"/>
        <dbReference type="ChEBI" id="CHEBI:15377"/>
        <dbReference type="ChEBI" id="CHEBI:15378"/>
        <dbReference type="ChEBI" id="CHEBI:30616"/>
        <dbReference type="ChEBI" id="CHEBI:43474"/>
        <dbReference type="ChEBI" id="CHEBI:57844"/>
        <dbReference type="ChEBI" id="CHEBI:456216"/>
        <dbReference type="EC" id="7.4.2.11"/>
    </reaction>
</comment>
<comment type="catalytic activity">
    <reaction evidence="1">
        <text>D-methionine(out) + ATP + H2O = D-methionine(in) + ADP + phosphate + H(+)</text>
        <dbReference type="Rhea" id="RHEA:29767"/>
        <dbReference type="ChEBI" id="CHEBI:15377"/>
        <dbReference type="ChEBI" id="CHEBI:15378"/>
        <dbReference type="ChEBI" id="CHEBI:30616"/>
        <dbReference type="ChEBI" id="CHEBI:43474"/>
        <dbReference type="ChEBI" id="CHEBI:57932"/>
        <dbReference type="ChEBI" id="CHEBI:456216"/>
        <dbReference type="EC" id="7.4.2.11"/>
    </reaction>
</comment>
<comment type="subunit">
    <text evidence="1">The complex is composed of two ATP-binding proteins (MetN), two transmembrane proteins (MetI) and a solute-binding protein (MetQ).</text>
</comment>
<comment type="subcellular location">
    <subcellularLocation>
        <location evidence="1">Cell inner membrane</location>
        <topology evidence="1">Peripheral membrane protein</topology>
    </subcellularLocation>
</comment>
<comment type="similarity">
    <text evidence="1">Belongs to the ABC transporter superfamily. Methionine importer (TC 3.A.1.24) family.</text>
</comment>
<organism>
    <name type="scientific">Rhizobium meliloti (strain 1021)</name>
    <name type="common">Ensifer meliloti</name>
    <name type="synonym">Sinorhizobium meliloti</name>
    <dbReference type="NCBI Taxonomy" id="266834"/>
    <lineage>
        <taxon>Bacteria</taxon>
        <taxon>Pseudomonadati</taxon>
        <taxon>Pseudomonadota</taxon>
        <taxon>Alphaproteobacteria</taxon>
        <taxon>Hyphomicrobiales</taxon>
        <taxon>Rhizobiaceae</taxon>
        <taxon>Sinorhizobium/Ensifer group</taxon>
        <taxon>Sinorhizobium</taxon>
    </lineage>
</organism>
<keyword id="KW-0029">Amino-acid transport</keyword>
<keyword id="KW-0067">ATP-binding</keyword>
<keyword id="KW-0997">Cell inner membrane</keyword>
<keyword id="KW-1003">Cell membrane</keyword>
<keyword id="KW-0472">Membrane</keyword>
<keyword id="KW-0547">Nucleotide-binding</keyword>
<keyword id="KW-1185">Reference proteome</keyword>
<keyword id="KW-1278">Translocase</keyword>
<keyword id="KW-0813">Transport</keyword>
<name>METN_RHIME</name>
<proteinExistence type="inferred from homology"/>
<reference key="1">
    <citation type="journal article" date="2001" name="Proc. Natl. Acad. Sci. U.S.A.">
        <title>Analysis of the chromosome sequence of the legume symbiont Sinorhizobium meliloti strain 1021.</title>
        <authorList>
            <person name="Capela D."/>
            <person name="Barloy-Hubler F."/>
            <person name="Gouzy J."/>
            <person name="Bothe G."/>
            <person name="Ampe F."/>
            <person name="Batut J."/>
            <person name="Boistard P."/>
            <person name="Becker A."/>
            <person name="Boutry M."/>
            <person name="Cadieu E."/>
            <person name="Dreano S."/>
            <person name="Gloux S."/>
            <person name="Godrie T."/>
            <person name="Goffeau A."/>
            <person name="Kahn D."/>
            <person name="Kiss E."/>
            <person name="Lelaure V."/>
            <person name="Masuy D."/>
            <person name="Pohl T."/>
            <person name="Portetelle D."/>
            <person name="Puehler A."/>
            <person name="Purnelle B."/>
            <person name="Ramsperger U."/>
            <person name="Renard C."/>
            <person name="Thebault P."/>
            <person name="Vandenbol M."/>
            <person name="Weidner S."/>
            <person name="Galibert F."/>
        </authorList>
    </citation>
    <scope>NUCLEOTIDE SEQUENCE [LARGE SCALE GENOMIC DNA]</scope>
    <source>
        <strain>1021</strain>
    </source>
</reference>
<reference key="2">
    <citation type="journal article" date="2001" name="Science">
        <title>The composite genome of the legume symbiont Sinorhizobium meliloti.</title>
        <authorList>
            <person name="Galibert F."/>
            <person name="Finan T.M."/>
            <person name="Long S.R."/>
            <person name="Puehler A."/>
            <person name="Abola P."/>
            <person name="Ampe F."/>
            <person name="Barloy-Hubler F."/>
            <person name="Barnett M.J."/>
            <person name="Becker A."/>
            <person name="Boistard P."/>
            <person name="Bothe G."/>
            <person name="Boutry M."/>
            <person name="Bowser L."/>
            <person name="Buhrmester J."/>
            <person name="Cadieu E."/>
            <person name="Capela D."/>
            <person name="Chain P."/>
            <person name="Cowie A."/>
            <person name="Davis R.W."/>
            <person name="Dreano S."/>
            <person name="Federspiel N.A."/>
            <person name="Fisher R.F."/>
            <person name="Gloux S."/>
            <person name="Godrie T."/>
            <person name="Goffeau A."/>
            <person name="Golding B."/>
            <person name="Gouzy J."/>
            <person name="Gurjal M."/>
            <person name="Hernandez-Lucas I."/>
            <person name="Hong A."/>
            <person name="Huizar L."/>
            <person name="Hyman R.W."/>
            <person name="Jones T."/>
            <person name="Kahn D."/>
            <person name="Kahn M.L."/>
            <person name="Kalman S."/>
            <person name="Keating D.H."/>
            <person name="Kiss E."/>
            <person name="Komp C."/>
            <person name="Lelaure V."/>
            <person name="Masuy D."/>
            <person name="Palm C."/>
            <person name="Peck M.C."/>
            <person name="Pohl T.M."/>
            <person name="Portetelle D."/>
            <person name="Purnelle B."/>
            <person name="Ramsperger U."/>
            <person name="Surzycki R."/>
            <person name="Thebault P."/>
            <person name="Vandenbol M."/>
            <person name="Vorhoelter F.J."/>
            <person name="Weidner S."/>
            <person name="Wells D.H."/>
            <person name="Wong K."/>
            <person name="Yeh K.-C."/>
            <person name="Batut J."/>
        </authorList>
    </citation>
    <scope>NUCLEOTIDE SEQUENCE [LARGE SCALE GENOMIC DNA]</scope>
    <source>
        <strain>1021</strain>
    </source>
</reference>
<evidence type="ECO:0000255" key="1">
    <source>
        <dbReference type="HAMAP-Rule" id="MF_01719"/>
    </source>
</evidence>
<gene>
    <name evidence="1" type="primary">metN</name>
    <name type="ordered locus">R02890</name>
    <name type="ORF">SMc03159</name>
</gene>
<sequence length="358" mass="37775">MTLPRSEISAGDAVVFDAVSKRFPASGGNTAFTALDNVSLAVARGSITGIIGRSGAGKSTLIRLVNGLEKPSSGKVFVDGVDVGALDEAGLRDLRRSVGMIFQHFNLLSSRTVFGNVALPLEIAGMDRRAIEQRVRPLLELVGLADKHGRYPAELSGGQKQRIGIARALATEPKLLLSDEATSALDPETTQSILELLRRINAELGLTVLLITHEMEVVKAVTSDVAVIDKGEIVERGHTFDVFTHSRHETTRALLSGLAGSKLPEAVARGLKPAAASGDRVVVRLTFFGAAAERPLISQLIQSVGAEVNIIAGTIDEIGGKPYGSLVVAYGADAETSGKAERFFTENGLVTEVLGYVA</sequence>
<protein>
    <recommendedName>
        <fullName evidence="1">Methionine import ATP-binding protein MetN</fullName>
        <ecNumber evidence="1">7.4.2.11</ecNumber>
    </recommendedName>
</protein>
<dbReference type="EC" id="7.4.2.11" evidence="1"/>
<dbReference type="EMBL" id="AL591688">
    <property type="protein sequence ID" value="CAC47469.1"/>
    <property type="molecule type" value="Genomic_DNA"/>
</dbReference>
<dbReference type="RefSeq" id="NP_386996.1">
    <property type="nucleotide sequence ID" value="NC_003047.1"/>
</dbReference>
<dbReference type="RefSeq" id="WP_010970269.1">
    <property type="nucleotide sequence ID" value="NC_003047.1"/>
</dbReference>
<dbReference type="SMR" id="Q92LX3"/>
<dbReference type="EnsemblBacteria" id="CAC47469">
    <property type="protein sequence ID" value="CAC47469"/>
    <property type="gene ID" value="SMc03159"/>
</dbReference>
<dbReference type="KEGG" id="sme:SMc03159"/>
<dbReference type="PATRIC" id="fig|266834.11.peg.4411"/>
<dbReference type="eggNOG" id="COG1135">
    <property type="taxonomic scope" value="Bacteria"/>
</dbReference>
<dbReference type="HOGENOM" id="CLU_000604_1_3_5"/>
<dbReference type="OrthoDB" id="9802264at2"/>
<dbReference type="Proteomes" id="UP000001976">
    <property type="component" value="Chromosome"/>
</dbReference>
<dbReference type="GO" id="GO:0005886">
    <property type="term" value="C:plasma membrane"/>
    <property type="evidence" value="ECO:0007669"/>
    <property type="project" value="UniProtKB-SubCell"/>
</dbReference>
<dbReference type="GO" id="GO:0033232">
    <property type="term" value="F:ABC-type D-methionine transporter activity"/>
    <property type="evidence" value="ECO:0007669"/>
    <property type="project" value="UniProtKB-EC"/>
</dbReference>
<dbReference type="GO" id="GO:0005524">
    <property type="term" value="F:ATP binding"/>
    <property type="evidence" value="ECO:0007669"/>
    <property type="project" value="UniProtKB-KW"/>
</dbReference>
<dbReference type="GO" id="GO:0016887">
    <property type="term" value="F:ATP hydrolysis activity"/>
    <property type="evidence" value="ECO:0007669"/>
    <property type="project" value="InterPro"/>
</dbReference>
<dbReference type="CDD" id="cd03258">
    <property type="entry name" value="ABC_MetN_methionine_transporter"/>
    <property type="match status" value="1"/>
</dbReference>
<dbReference type="FunFam" id="3.40.50.300:FF:000056">
    <property type="entry name" value="Cell division ATP-binding protein FtsE"/>
    <property type="match status" value="1"/>
</dbReference>
<dbReference type="Gene3D" id="3.30.70.260">
    <property type="match status" value="1"/>
</dbReference>
<dbReference type="Gene3D" id="3.40.50.300">
    <property type="entry name" value="P-loop containing nucleotide triphosphate hydrolases"/>
    <property type="match status" value="1"/>
</dbReference>
<dbReference type="InterPro" id="IPR003593">
    <property type="entry name" value="AAA+_ATPase"/>
</dbReference>
<dbReference type="InterPro" id="IPR003439">
    <property type="entry name" value="ABC_transporter-like_ATP-bd"/>
</dbReference>
<dbReference type="InterPro" id="IPR017871">
    <property type="entry name" value="ABC_transporter-like_CS"/>
</dbReference>
<dbReference type="InterPro" id="IPR045865">
    <property type="entry name" value="ACT-like_dom_sf"/>
</dbReference>
<dbReference type="InterPro" id="IPR041701">
    <property type="entry name" value="MetN_ABC"/>
</dbReference>
<dbReference type="InterPro" id="IPR050086">
    <property type="entry name" value="MetN_ABC_transporter-like"/>
</dbReference>
<dbReference type="InterPro" id="IPR018449">
    <property type="entry name" value="NIL_domain"/>
</dbReference>
<dbReference type="InterPro" id="IPR027417">
    <property type="entry name" value="P-loop_NTPase"/>
</dbReference>
<dbReference type="PANTHER" id="PTHR43166">
    <property type="entry name" value="AMINO ACID IMPORT ATP-BINDING PROTEIN"/>
    <property type="match status" value="1"/>
</dbReference>
<dbReference type="PANTHER" id="PTHR43166:SF30">
    <property type="entry name" value="METHIONINE IMPORT ATP-BINDING PROTEIN METN"/>
    <property type="match status" value="1"/>
</dbReference>
<dbReference type="Pfam" id="PF00005">
    <property type="entry name" value="ABC_tran"/>
    <property type="match status" value="1"/>
</dbReference>
<dbReference type="Pfam" id="PF09383">
    <property type="entry name" value="NIL"/>
    <property type="match status" value="1"/>
</dbReference>
<dbReference type="SMART" id="SM00382">
    <property type="entry name" value="AAA"/>
    <property type="match status" value="1"/>
</dbReference>
<dbReference type="SMART" id="SM00930">
    <property type="entry name" value="NIL"/>
    <property type="match status" value="1"/>
</dbReference>
<dbReference type="SUPFAM" id="SSF55021">
    <property type="entry name" value="ACT-like"/>
    <property type="match status" value="1"/>
</dbReference>
<dbReference type="SUPFAM" id="SSF52540">
    <property type="entry name" value="P-loop containing nucleoside triphosphate hydrolases"/>
    <property type="match status" value="1"/>
</dbReference>
<dbReference type="PROSITE" id="PS00211">
    <property type="entry name" value="ABC_TRANSPORTER_1"/>
    <property type="match status" value="1"/>
</dbReference>
<dbReference type="PROSITE" id="PS50893">
    <property type="entry name" value="ABC_TRANSPORTER_2"/>
    <property type="match status" value="1"/>
</dbReference>
<dbReference type="PROSITE" id="PS51264">
    <property type="entry name" value="METN"/>
    <property type="match status" value="1"/>
</dbReference>
<feature type="chain" id="PRO_0000270366" description="Methionine import ATP-binding protein MetN">
    <location>
        <begin position="1"/>
        <end position="358"/>
    </location>
</feature>
<feature type="domain" description="ABC transporter" evidence="1">
    <location>
        <begin position="14"/>
        <end position="255"/>
    </location>
</feature>
<feature type="binding site" evidence="1">
    <location>
        <begin position="52"/>
        <end position="59"/>
    </location>
    <ligand>
        <name>ATP</name>
        <dbReference type="ChEBI" id="CHEBI:30616"/>
    </ligand>
</feature>